<organismHost>
    <name type="scientific">Aves</name>
    <dbReference type="NCBI Taxonomy" id="8782"/>
</organismHost>
<organismHost>
    <name type="scientific">Cetacea</name>
    <name type="common">whales</name>
    <dbReference type="NCBI Taxonomy" id="9721"/>
</organismHost>
<organismHost>
    <name type="scientific">Homo sapiens</name>
    <name type="common">Human</name>
    <dbReference type="NCBI Taxonomy" id="9606"/>
</organismHost>
<organismHost>
    <name type="scientific">Phocidae</name>
    <name type="common">true seals</name>
    <dbReference type="NCBI Taxonomy" id="9709"/>
</organismHost>
<organismHost>
    <name type="scientific">Sus scrofa</name>
    <name type="common">Pig</name>
    <dbReference type="NCBI Taxonomy" id="9823"/>
</organismHost>
<organism>
    <name type="scientific">Influenza A virus (strain A/Hong Kong/5/1983 H3N2)</name>
    <dbReference type="NCBI Taxonomy" id="387159"/>
    <lineage>
        <taxon>Viruses</taxon>
        <taxon>Riboviria</taxon>
        <taxon>Orthornavirae</taxon>
        <taxon>Negarnaviricota</taxon>
        <taxon>Polyploviricotina</taxon>
        <taxon>Insthoviricetes</taxon>
        <taxon>Articulavirales</taxon>
        <taxon>Orthomyxoviridae</taxon>
        <taxon>Alphainfluenzavirus</taxon>
        <taxon>Alphainfluenzavirus influenzae</taxon>
        <taxon>Influenza A virus</taxon>
    </lineage>
</organism>
<name>M2_I83A8</name>
<accession>Q38SQ7</accession>
<protein>
    <recommendedName>
        <fullName evidence="1">Matrix protein 2</fullName>
    </recommendedName>
    <alternativeName>
        <fullName evidence="1">Proton channel protein M2</fullName>
    </alternativeName>
</protein>
<evidence type="ECO:0000255" key="1">
    <source>
        <dbReference type="HAMAP-Rule" id="MF_04069"/>
    </source>
</evidence>
<evidence type="ECO:0000256" key="2">
    <source>
        <dbReference type="SAM" id="MobiDB-lite"/>
    </source>
</evidence>
<reference key="1">
    <citation type="submission" date="2005-10" db="EMBL/GenBank/DDBJ databases">
        <title>The NIAID influenza genome sequencing project.</title>
        <authorList>
            <person name="Ghedin E."/>
            <person name="Spiro D."/>
            <person name="Miller N."/>
            <person name="Zaborsky J."/>
            <person name="Feldblyum T."/>
            <person name="Subbu V."/>
            <person name="Shumway M."/>
            <person name="Sparenborg J."/>
            <person name="Groveman L."/>
            <person name="Halpin R."/>
            <person name="Sitz J."/>
            <person name="Koo H."/>
            <person name="Salzberg S.L."/>
            <person name="Webster R.G."/>
            <person name="Hoffmann E."/>
            <person name="Krauss S."/>
            <person name="Naeve C."/>
            <person name="Bao Y."/>
            <person name="Bolotov P."/>
            <person name="Dernovoy D."/>
            <person name="Kiryutin B."/>
            <person name="Lipman D.J."/>
            <person name="Tatusova T."/>
        </authorList>
    </citation>
    <scope>NUCLEOTIDE SEQUENCE [GENOMIC RNA]</scope>
</reference>
<proteinExistence type="inferred from homology"/>
<gene>
    <name evidence="1" type="primary">M</name>
</gene>
<comment type="function">
    <text evidence="1">Forms a proton-selective ion channel that is necessary for the efficient release of the viral genome during virus entry. After attaching to the cell surface, the virion enters the cell by endocytosis. Acidification of the endosome triggers M2 ion channel activity. The influx of protons into virion interior is believed to disrupt interactions between the viral ribonucleoprotein (RNP), matrix protein 1 (M1), and lipid bilayers, thereby freeing the viral genome from interaction with viral proteins and enabling RNA segments to migrate to the host cell nucleus, where influenza virus RNA transcription and replication occur. Also plays a role in viral proteins secretory pathway. Elevates the intravesicular pH of normally acidic compartments, such as trans-Golgi network, preventing newly formed hemagglutinin from premature switching to the fusion-active conformation.</text>
</comment>
<comment type="activity regulation">
    <text>The M2 protein from most influenza A strains is inhibited by amantadine and rimantadine, resulting in viral uncoating incapacity. Emergence of amantadine-resistant variants is usually rapid.</text>
</comment>
<comment type="subunit">
    <text evidence="1">Homotetramer; composed of two disulfide-linked dimers held together by non-covalent interactions. May interact with matrix protein 1.</text>
</comment>
<comment type="subcellular location">
    <subcellularLocation>
        <location evidence="1">Virion membrane</location>
    </subcellularLocation>
    <subcellularLocation>
        <location evidence="1">Host apical cell membrane</location>
        <topology evidence="1">Single-pass type III membrane protein</topology>
    </subcellularLocation>
    <text evidence="1">Abundantly expressed at the apical plasma membrane in infected polarized epithelial cells, in close proximity to budding and assembled virions. Minor component of virions (only 16-20 molecules/virion).</text>
</comment>
<comment type="alternative products">
    <event type="alternative splicing"/>
    <isoform>
        <id>Q38SQ7-1</id>
        <name>M2</name>
        <sequence type="displayed"/>
    </isoform>
    <isoform>
        <id>Q38SQ6-1</id>
        <name>M1</name>
        <sequence type="external"/>
    </isoform>
    <text>Only the first 9 residues are shared by the 2 isoforms.</text>
</comment>
<comment type="domain">
    <text evidence="1">Cytoplasmic tail plays an important role in virion assembly and morphogenesis.</text>
</comment>
<comment type="miscellaneous">
    <text evidence="1">When the channel is activated, one or more imidazole moieties of His-37 probably become bi-protonated.</text>
</comment>
<comment type="similarity">
    <text evidence="1">Belongs to the influenza viruses matrix protein M2 family.</text>
</comment>
<feature type="chain" id="PRO_0000326381" description="Matrix protein 2">
    <location>
        <begin position="1"/>
        <end position="97"/>
    </location>
</feature>
<feature type="topological domain" description="Virion surface" evidence="1">
    <location>
        <begin position="1"/>
        <end position="22"/>
    </location>
</feature>
<feature type="transmembrane region" description="Helical; Signal-anchor for type III membrane protein" evidence="1">
    <location>
        <begin position="23"/>
        <end position="43"/>
    </location>
</feature>
<feature type="topological domain" description="Intravirion" evidence="1">
    <location>
        <begin position="44"/>
        <end position="97"/>
    </location>
</feature>
<feature type="region of interest" description="Disordered" evidence="2">
    <location>
        <begin position="59"/>
        <end position="88"/>
    </location>
</feature>
<feature type="compositionally biased region" description="Basic and acidic residues" evidence="2">
    <location>
        <begin position="71"/>
        <end position="80"/>
    </location>
</feature>
<feature type="site" description="Essential for channel activity, possibly by being protonated during channel activation, and by forming the channel gate and the selective filter" evidence="1">
    <location>
        <position position="37"/>
    </location>
</feature>
<feature type="site" description="Seems to be involved in pH gating" evidence="1">
    <location>
        <position position="41"/>
    </location>
</feature>
<feature type="modified residue" description="Phosphoserine; by host" evidence="1">
    <location>
        <position position="64"/>
    </location>
</feature>
<feature type="modified residue" description="Phosphoserine; by host" evidence="1">
    <location>
        <position position="93"/>
    </location>
</feature>
<feature type="lipid moiety-binding region" description="S-palmitoyl cysteine; by host" evidence="1">
    <location>
        <position position="50"/>
    </location>
</feature>
<feature type="glycosylation site" description="N-linked (GlcNAc...) asparagine; by host" evidence="1">
    <location>
        <position position="20"/>
    </location>
</feature>
<feature type="disulfide bond" description="Interchain (with C-17)" evidence="1">
    <location>
        <position position="17"/>
    </location>
</feature>
<feature type="disulfide bond" description="Interchain (with C-19)" evidence="1">
    <location>
        <position position="19"/>
    </location>
</feature>
<keyword id="KW-0025">Alternative splicing</keyword>
<keyword id="KW-1015">Disulfide bond</keyword>
<keyword id="KW-0325">Glycoprotein</keyword>
<keyword id="KW-1032">Host cell membrane</keyword>
<keyword id="KW-1043">Host membrane</keyword>
<keyword id="KW-0945">Host-virus interaction</keyword>
<keyword id="KW-0375">Hydrogen ion transport</keyword>
<keyword id="KW-1083">Inhibition of host autophagy by virus</keyword>
<keyword id="KW-0407">Ion channel</keyword>
<keyword id="KW-0406">Ion transport</keyword>
<keyword id="KW-0449">Lipoprotein</keyword>
<keyword id="KW-0472">Membrane</keyword>
<keyword id="KW-0564">Palmitate</keyword>
<keyword id="KW-0597">Phosphoprotein</keyword>
<keyword id="KW-0735">Signal-anchor</keyword>
<keyword id="KW-0812">Transmembrane</keyword>
<keyword id="KW-1133">Transmembrane helix</keyword>
<keyword id="KW-0813">Transport</keyword>
<keyword id="KW-1182">Viral ion channel</keyword>
<keyword id="KW-0946">Virion</keyword>
<dbReference type="EMBL" id="CY003737">
    <property type="protein sequence ID" value="ABB04941.1"/>
    <property type="molecule type" value="Genomic_RNA"/>
</dbReference>
<dbReference type="SMR" id="Q38SQ7"/>
<dbReference type="GlyCosmos" id="Q38SQ7">
    <property type="glycosylation" value="1 site, No reported glycans"/>
</dbReference>
<dbReference type="Proteomes" id="UP000167548">
    <property type="component" value="Genome"/>
</dbReference>
<dbReference type="GO" id="GO:0020002">
    <property type="term" value="C:host cell plasma membrane"/>
    <property type="evidence" value="ECO:0007669"/>
    <property type="project" value="UniProtKB-SubCell"/>
</dbReference>
<dbReference type="GO" id="GO:0016020">
    <property type="term" value="C:membrane"/>
    <property type="evidence" value="ECO:0007669"/>
    <property type="project" value="UniProtKB-UniRule"/>
</dbReference>
<dbReference type="GO" id="GO:0055036">
    <property type="term" value="C:virion membrane"/>
    <property type="evidence" value="ECO:0007669"/>
    <property type="project" value="UniProtKB-SubCell"/>
</dbReference>
<dbReference type="GO" id="GO:0005216">
    <property type="term" value="F:monoatomic ion channel activity"/>
    <property type="evidence" value="ECO:0007669"/>
    <property type="project" value="UniProtKB-UniRule"/>
</dbReference>
<dbReference type="GO" id="GO:0015078">
    <property type="term" value="F:proton transmembrane transporter activity"/>
    <property type="evidence" value="ECO:0007669"/>
    <property type="project" value="UniProtKB-UniRule"/>
</dbReference>
<dbReference type="GO" id="GO:0051259">
    <property type="term" value="P:protein complex oligomerization"/>
    <property type="evidence" value="ECO:0007669"/>
    <property type="project" value="UniProtKB-UniRule"/>
</dbReference>
<dbReference type="GO" id="GO:0044694">
    <property type="term" value="P:symbiont genome entry into host cell via pore formation in plasma membrane"/>
    <property type="evidence" value="ECO:0007669"/>
    <property type="project" value="UniProtKB-UniRule"/>
</dbReference>
<dbReference type="GO" id="GO:0140321">
    <property type="term" value="P:symbiont-mediated suppression of host autophagy"/>
    <property type="evidence" value="ECO:0007669"/>
    <property type="project" value="UniProtKB-KW"/>
</dbReference>
<dbReference type="Gene3D" id="6.10.250.1640">
    <property type="match status" value="1"/>
</dbReference>
<dbReference type="HAMAP" id="MF_04069">
    <property type="entry name" value="INFV_M2"/>
    <property type="match status" value="1"/>
</dbReference>
<dbReference type="InterPro" id="IPR002089">
    <property type="entry name" value="Flu_M2"/>
</dbReference>
<dbReference type="Pfam" id="PF00599">
    <property type="entry name" value="Flu_M2"/>
    <property type="match status" value="1"/>
</dbReference>
<sequence>MSLLTEVETPIRNEWGCRCNDSSDPLVVAASIIGILHLILWILDRLFFKCIYRLFKHGLKRGPSTEGVPESMREEYRKEQQNAVDADDSHFVSIELE</sequence>